<organism>
    <name type="scientific">Nostoc punctiforme (strain ATCC 29133 / PCC 73102)</name>
    <dbReference type="NCBI Taxonomy" id="63737"/>
    <lineage>
        <taxon>Bacteria</taxon>
        <taxon>Bacillati</taxon>
        <taxon>Cyanobacteriota</taxon>
        <taxon>Cyanophyceae</taxon>
        <taxon>Nostocales</taxon>
        <taxon>Nostocaceae</taxon>
        <taxon>Nostoc</taxon>
    </lineage>
</organism>
<gene>
    <name evidence="1" type="primary">pdxJ</name>
    <name type="ordered locus">Npun_R3775</name>
</gene>
<proteinExistence type="inferred from homology"/>
<name>PDXJ_NOSP7</name>
<keyword id="KW-0963">Cytoplasm</keyword>
<keyword id="KW-0664">Pyridoxine biosynthesis</keyword>
<keyword id="KW-1185">Reference proteome</keyword>
<keyword id="KW-0808">Transferase</keyword>
<protein>
    <recommendedName>
        <fullName evidence="1">Pyridoxine 5'-phosphate synthase</fullName>
        <shortName evidence="1">PNP synthase</shortName>
        <ecNumber evidence="1">2.6.99.2</ecNumber>
    </recommendedName>
</protein>
<reference key="1">
    <citation type="journal article" date="2013" name="Plant Physiol.">
        <title>A Nostoc punctiforme Sugar Transporter Necessary to Establish a Cyanobacterium-Plant Symbiosis.</title>
        <authorList>
            <person name="Ekman M."/>
            <person name="Picossi S."/>
            <person name="Campbell E.L."/>
            <person name="Meeks J.C."/>
            <person name="Flores E."/>
        </authorList>
    </citation>
    <scope>NUCLEOTIDE SEQUENCE [LARGE SCALE GENOMIC DNA]</scope>
    <source>
        <strain>ATCC 29133 / PCC 73102</strain>
    </source>
</reference>
<comment type="function">
    <text evidence="1">Catalyzes the complicated ring closure reaction between the two acyclic compounds 1-deoxy-D-xylulose-5-phosphate (DXP) and 3-amino-2-oxopropyl phosphate (1-amino-acetone-3-phosphate or AAP) to form pyridoxine 5'-phosphate (PNP) and inorganic phosphate.</text>
</comment>
<comment type="catalytic activity">
    <reaction evidence="1">
        <text>3-amino-2-oxopropyl phosphate + 1-deoxy-D-xylulose 5-phosphate = pyridoxine 5'-phosphate + phosphate + 2 H2O + H(+)</text>
        <dbReference type="Rhea" id="RHEA:15265"/>
        <dbReference type="ChEBI" id="CHEBI:15377"/>
        <dbReference type="ChEBI" id="CHEBI:15378"/>
        <dbReference type="ChEBI" id="CHEBI:43474"/>
        <dbReference type="ChEBI" id="CHEBI:57279"/>
        <dbReference type="ChEBI" id="CHEBI:57792"/>
        <dbReference type="ChEBI" id="CHEBI:58589"/>
        <dbReference type="EC" id="2.6.99.2"/>
    </reaction>
</comment>
<comment type="pathway">
    <text evidence="1">Cofactor biosynthesis; pyridoxine 5'-phosphate biosynthesis; pyridoxine 5'-phosphate from D-erythrose 4-phosphate: step 5/5.</text>
</comment>
<comment type="subunit">
    <text evidence="1">Homooctamer; tetramer of dimers.</text>
</comment>
<comment type="subcellular location">
    <subcellularLocation>
        <location evidence="1">Cytoplasm</location>
    </subcellularLocation>
</comment>
<comment type="similarity">
    <text evidence="1">Belongs to the PNP synthase family.</text>
</comment>
<feature type="chain" id="PRO_1000114817" description="Pyridoxine 5'-phosphate synthase">
    <location>
        <begin position="1"/>
        <end position="241"/>
    </location>
</feature>
<feature type="active site" description="Proton acceptor" evidence="1">
    <location>
        <position position="43"/>
    </location>
</feature>
<feature type="active site" description="Proton acceptor" evidence="1">
    <location>
        <position position="70"/>
    </location>
</feature>
<feature type="active site" description="Proton donor" evidence="1">
    <location>
        <position position="191"/>
    </location>
</feature>
<feature type="binding site" evidence="1">
    <location>
        <position position="7"/>
    </location>
    <ligand>
        <name>3-amino-2-oxopropyl phosphate</name>
        <dbReference type="ChEBI" id="CHEBI:57279"/>
    </ligand>
</feature>
<feature type="binding site" evidence="1">
    <location>
        <begin position="9"/>
        <end position="10"/>
    </location>
    <ligand>
        <name>1-deoxy-D-xylulose 5-phosphate</name>
        <dbReference type="ChEBI" id="CHEBI:57792"/>
    </ligand>
</feature>
<feature type="binding site" evidence="1">
    <location>
        <position position="18"/>
    </location>
    <ligand>
        <name>3-amino-2-oxopropyl phosphate</name>
        <dbReference type="ChEBI" id="CHEBI:57279"/>
    </ligand>
</feature>
<feature type="binding site" evidence="1">
    <location>
        <position position="45"/>
    </location>
    <ligand>
        <name>1-deoxy-D-xylulose 5-phosphate</name>
        <dbReference type="ChEBI" id="CHEBI:57792"/>
    </ligand>
</feature>
<feature type="binding site" evidence="1">
    <location>
        <position position="50"/>
    </location>
    <ligand>
        <name>1-deoxy-D-xylulose 5-phosphate</name>
        <dbReference type="ChEBI" id="CHEBI:57792"/>
    </ligand>
</feature>
<feature type="binding site" evidence="1">
    <location>
        <position position="100"/>
    </location>
    <ligand>
        <name>1-deoxy-D-xylulose 5-phosphate</name>
        <dbReference type="ChEBI" id="CHEBI:57792"/>
    </ligand>
</feature>
<feature type="binding site" evidence="1">
    <location>
        <position position="192"/>
    </location>
    <ligand>
        <name>3-amino-2-oxopropyl phosphate</name>
        <dbReference type="ChEBI" id="CHEBI:57279"/>
    </ligand>
</feature>
<feature type="binding site" evidence="1">
    <location>
        <begin position="213"/>
        <end position="214"/>
    </location>
    <ligand>
        <name>3-amino-2-oxopropyl phosphate</name>
        <dbReference type="ChEBI" id="CHEBI:57279"/>
    </ligand>
</feature>
<feature type="site" description="Transition state stabilizer" evidence="1">
    <location>
        <position position="151"/>
    </location>
</feature>
<dbReference type="EC" id="2.6.99.2" evidence="1"/>
<dbReference type="EMBL" id="CP001037">
    <property type="protein sequence ID" value="ACC82160.1"/>
    <property type="molecule type" value="Genomic_DNA"/>
</dbReference>
<dbReference type="RefSeq" id="WP_012410131.1">
    <property type="nucleotide sequence ID" value="NC_010628.1"/>
</dbReference>
<dbReference type="SMR" id="B2J448"/>
<dbReference type="STRING" id="63737.Npun_R3775"/>
<dbReference type="EnsemblBacteria" id="ACC82160">
    <property type="protein sequence ID" value="ACC82160"/>
    <property type="gene ID" value="Npun_R3775"/>
</dbReference>
<dbReference type="KEGG" id="npu:Npun_R3775"/>
<dbReference type="eggNOG" id="COG0854">
    <property type="taxonomic scope" value="Bacteria"/>
</dbReference>
<dbReference type="HOGENOM" id="CLU_074563_0_0_3"/>
<dbReference type="OrthoDB" id="9806590at2"/>
<dbReference type="PhylomeDB" id="B2J448"/>
<dbReference type="UniPathway" id="UPA00244">
    <property type="reaction ID" value="UER00313"/>
</dbReference>
<dbReference type="Proteomes" id="UP000001191">
    <property type="component" value="Chromosome"/>
</dbReference>
<dbReference type="GO" id="GO:0005829">
    <property type="term" value="C:cytosol"/>
    <property type="evidence" value="ECO:0007669"/>
    <property type="project" value="TreeGrafter"/>
</dbReference>
<dbReference type="GO" id="GO:0033856">
    <property type="term" value="F:pyridoxine 5'-phosphate synthase activity"/>
    <property type="evidence" value="ECO:0007669"/>
    <property type="project" value="UniProtKB-EC"/>
</dbReference>
<dbReference type="GO" id="GO:0008615">
    <property type="term" value="P:pyridoxine biosynthetic process"/>
    <property type="evidence" value="ECO:0007669"/>
    <property type="project" value="UniProtKB-UniRule"/>
</dbReference>
<dbReference type="CDD" id="cd00003">
    <property type="entry name" value="PNPsynthase"/>
    <property type="match status" value="1"/>
</dbReference>
<dbReference type="Gene3D" id="3.20.20.70">
    <property type="entry name" value="Aldolase class I"/>
    <property type="match status" value="1"/>
</dbReference>
<dbReference type="HAMAP" id="MF_00279">
    <property type="entry name" value="PdxJ"/>
    <property type="match status" value="1"/>
</dbReference>
<dbReference type="InterPro" id="IPR013785">
    <property type="entry name" value="Aldolase_TIM"/>
</dbReference>
<dbReference type="InterPro" id="IPR004569">
    <property type="entry name" value="PyrdxlP_synth_PdxJ"/>
</dbReference>
<dbReference type="InterPro" id="IPR036130">
    <property type="entry name" value="Pyridoxine-5'_phos_synth"/>
</dbReference>
<dbReference type="NCBIfam" id="TIGR00559">
    <property type="entry name" value="pdxJ"/>
    <property type="match status" value="1"/>
</dbReference>
<dbReference type="NCBIfam" id="NF003623">
    <property type="entry name" value="PRK05265.1-1"/>
    <property type="match status" value="1"/>
</dbReference>
<dbReference type="NCBIfam" id="NF003625">
    <property type="entry name" value="PRK05265.1-3"/>
    <property type="match status" value="1"/>
</dbReference>
<dbReference type="NCBIfam" id="NF003627">
    <property type="entry name" value="PRK05265.1-5"/>
    <property type="match status" value="1"/>
</dbReference>
<dbReference type="PANTHER" id="PTHR30456">
    <property type="entry name" value="PYRIDOXINE 5'-PHOSPHATE SYNTHASE"/>
    <property type="match status" value="1"/>
</dbReference>
<dbReference type="PANTHER" id="PTHR30456:SF0">
    <property type="entry name" value="PYRIDOXINE 5'-PHOSPHATE SYNTHASE"/>
    <property type="match status" value="1"/>
</dbReference>
<dbReference type="Pfam" id="PF03740">
    <property type="entry name" value="PdxJ"/>
    <property type="match status" value="1"/>
</dbReference>
<dbReference type="SUPFAM" id="SSF63892">
    <property type="entry name" value="Pyridoxine 5'-phosphate synthase"/>
    <property type="match status" value="1"/>
</dbReference>
<evidence type="ECO:0000255" key="1">
    <source>
        <dbReference type="HAMAP-Rule" id="MF_00279"/>
    </source>
</evidence>
<accession>B2J448</accession>
<sequence length="241" mass="26360">MPTLGVNIDHIATIRQARRTVEPDPVAAAVLAELAGADGITVHLREDRRHIQDRDVRILRQTVRSHLNLEMAATEEMLAIALDIKPDYVTLVPEKREEVTTEGGLDIIGQIARIGEIVDKLQSASIPVSLFIDAEPAQIEASVKVQAQFIELHTGQYAEAKDETNRHRELAILAKGCQQAIQAGLRVNAGHGLTYWNVYPVAALPGMEELNIGHTIISRAALVGIERAVREMKQAIRGNGA</sequence>